<dbReference type="EC" id="2.7.1.25" evidence="1"/>
<dbReference type="EMBL" id="CP001147">
    <property type="protein sequence ID" value="ACI21415.1"/>
    <property type="molecule type" value="Genomic_DNA"/>
</dbReference>
<dbReference type="RefSeq" id="WP_012546131.1">
    <property type="nucleotide sequence ID" value="NC_011296.1"/>
</dbReference>
<dbReference type="RefSeq" id="YP_002248321.1">
    <property type="nucleotide sequence ID" value="NC_011296.1"/>
</dbReference>
<dbReference type="SMR" id="B5YJA6"/>
<dbReference type="FunCoup" id="B5YJA6">
    <property type="interactions" value="102"/>
</dbReference>
<dbReference type="STRING" id="289376.THEYE_A0476"/>
<dbReference type="EnsemblBacteria" id="ACI21415">
    <property type="protein sequence ID" value="ACI21415"/>
    <property type="gene ID" value="THEYE_A0476"/>
</dbReference>
<dbReference type="KEGG" id="tye:THEYE_A0476"/>
<dbReference type="PATRIC" id="fig|289376.4.peg.471"/>
<dbReference type="eggNOG" id="COG0529">
    <property type="taxonomic scope" value="Bacteria"/>
</dbReference>
<dbReference type="HOGENOM" id="CLU_046932_1_0_0"/>
<dbReference type="InParanoid" id="B5YJA6"/>
<dbReference type="OrthoDB" id="9804504at2"/>
<dbReference type="UniPathway" id="UPA00140">
    <property type="reaction ID" value="UER00205"/>
</dbReference>
<dbReference type="Proteomes" id="UP000000718">
    <property type="component" value="Chromosome"/>
</dbReference>
<dbReference type="GO" id="GO:0004020">
    <property type="term" value="F:adenylylsulfate kinase activity"/>
    <property type="evidence" value="ECO:0000318"/>
    <property type="project" value="GO_Central"/>
</dbReference>
<dbReference type="GO" id="GO:0005524">
    <property type="term" value="F:ATP binding"/>
    <property type="evidence" value="ECO:0007669"/>
    <property type="project" value="UniProtKB-UniRule"/>
</dbReference>
<dbReference type="GO" id="GO:0070814">
    <property type="term" value="P:hydrogen sulfide biosynthetic process"/>
    <property type="evidence" value="ECO:0007669"/>
    <property type="project" value="UniProtKB-UniRule"/>
</dbReference>
<dbReference type="GO" id="GO:0000103">
    <property type="term" value="P:sulfate assimilation"/>
    <property type="evidence" value="ECO:0007669"/>
    <property type="project" value="UniProtKB-UniRule"/>
</dbReference>
<dbReference type="CDD" id="cd02027">
    <property type="entry name" value="APSK"/>
    <property type="match status" value="1"/>
</dbReference>
<dbReference type="FunFam" id="3.40.50.300:FF:001219">
    <property type="entry name" value="Adenylyl-sulfate kinase"/>
    <property type="match status" value="1"/>
</dbReference>
<dbReference type="Gene3D" id="3.40.50.300">
    <property type="entry name" value="P-loop containing nucleotide triphosphate hydrolases"/>
    <property type="match status" value="1"/>
</dbReference>
<dbReference type="HAMAP" id="MF_00065">
    <property type="entry name" value="Adenylyl_sulf_kinase"/>
    <property type="match status" value="1"/>
</dbReference>
<dbReference type="InterPro" id="IPR002891">
    <property type="entry name" value="APS_kinase"/>
</dbReference>
<dbReference type="InterPro" id="IPR027417">
    <property type="entry name" value="P-loop_NTPase"/>
</dbReference>
<dbReference type="NCBIfam" id="TIGR00455">
    <property type="entry name" value="apsK"/>
    <property type="match status" value="1"/>
</dbReference>
<dbReference type="NCBIfam" id="NF003013">
    <property type="entry name" value="PRK03846.1"/>
    <property type="match status" value="1"/>
</dbReference>
<dbReference type="PANTHER" id="PTHR11055">
    <property type="entry name" value="BIFUNCTIONAL 3'-PHOSPHOADENOSINE 5'-PHOSPHOSULFATE SYNTHASE"/>
    <property type="match status" value="1"/>
</dbReference>
<dbReference type="PANTHER" id="PTHR11055:SF1">
    <property type="entry name" value="PAPS SYNTHETASE, ISOFORM D"/>
    <property type="match status" value="1"/>
</dbReference>
<dbReference type="Pfam" id="PF01583">
    <property type="entry name" value="APS_kinase"/>
    <property type="match status" value="1"/>
</dbReference>
<dbReference type="SUPFAM" id="SSF52540">
    <property type="entry name" value="P-loop containing nucleoside triphosphate hydrolases"/>
    <property type="match status" value="1"/>
</dbReference>
<feature type="chain" id="PRO_1000117959" description="Adenylyl-sulfate kinase">
    <location>
        <begin position="1"/>
        <end position="200"/>
    </location>
</feature>
<feature type="active site" description="Phosphoserine intermediate" evidence="1">
    <location>
        <position position="109"/>
    </location>
</feature>
<feature type="binding site" evidence="1">
    <location>
        <begin position="35"/>
        <end position="42"/>
    </location>
    <ligand>
        <name>ATP</name>
        <dbReference type="ChEBI" id="CHEBI:30616"/>
    </ligand>
</feature>
<accession>B5YJA6</accession>
<keyword id="KW-0067">ATP-binding</keyword>
<keyword id="KW-0418">Kinase</keyword>
<keyword id="KW-0547">Nucleotide-binding</keyword>
<keyword id="KW-0597">Phosphoprotein</keyword>
<keyword id="KW-1185">Reference proteome</keyword>
<keyword id="KW-0808">Transferase</keyword>
<gene>
    <name evidence="1" type="primary">cysC</name>
    <name type="ordered locus">THEYE_A0476</name>
</gene>
<evidence type="ECO:0000255" key="1">
    <source>
        <dbReference type="HAMAP-Rule" id="MF_00065"/>
    </source>
</evidence>
<organism>
    <name type="scientific">Thermodesulfovibrio yellowstonii (strain ATCC 51303 / DSM 11347 / YP87)</name>
    <dbReference type="NCBI Taxonomy" id="289376"/>
    <lineage>
        <taxon>Bacteria</taxon>
        <taxon>Pseudomonadati</taxon>
        <taxon>Nitrospirota</taxon>
        <taxon>Thermodesulfovibrionia</taxon>
        <taxon>Thermodesulfovibrionales</taxon>
        <taxon>Thermodesulfovibrionaceae</taxon>
        <taxon>Thermodesulfovibrio</taxon>
    </lineage>
</organism>
<sequence length="200" mass="23070">MKKSNNNLTLYKGYINREDRERLHGHKSFVIWFTGLPASGKSTIAHLVEKELYKRGCSTYVLDGDNVRYGLCSDLGFSIEERKENIRRVGELVKLFVDAGIIVITSFISPFKEDREKVRSLFKEEDFIEVYTKCPVETCSLRDQKGIYKKAIKGEIKNFTGISAPYEEPENPEITIFTDIDSPIEACQKILRYIKDKLKL</sequence>
<name>CYSC_THEYD</name>
<proteinExistence type="inferred from homology"/>
<comment type="function">
    <text evidence="1">Catalyzes the synthesis of activated sulfate.</text>
</comment>
<comment type="catalytic activity">
    <reaction evidence="1">
        <text>adenosine 5'-phosphosulfate + ATP = 3'-phosphoadenylyl sulfate + ADP + H(+)</text>
        <dbReference type="Rhea" id="RHEA:24152"/>
        <dbReference type="ChEBI" id="CHEBI:15378"/>
        <dbReference type="ChEBI" id="CHEBI:30616"/>
        <dbReference type="ChEBI" id="CHEBI:58243"/>
        <dbReference type="ChEBI" id="CHEBI:58339"/>
        <dbReference type="ChEBI" id="CHEBI:456216"/>
        <dbReference type="EC" id="2.7.1.25"/>
    </reaction>
</comment>
<comment type="pathway">
    <text evidence="1">Sulfur metabolism; hydrogen sulfide biosynthesis; sulfite from sulfate: step 2/3.</text>
</comment>
<comment type="similarity">
    <text evidence="1">Belongs to the APS kinase family.</text>
</comment>
<reference key="1">
    <citation type="submission" date="2008-08" db="EMBL/GenBank/DDBJ databases">
        <title>The complete genome sequence of Thermodesulfovibrio yellowstonii strain ATCC 51303 / DSM 11347 / YP87.</title>
        <authorList>
            <person name="Dodson R.J."/>
            <person name="Durkin A.S."/>
            <person name="Wu M."/>
            <person name="Eisen J."/>
            <person name="Sutton G."/>
        </authorList>
    </citation>
    <scope>NUCLEOTIDE SEQUENCE [LARGE SCALE GENOMIC DNA]</scope>
    <source>
        <strain>ATCC 51303 / DSM 11347 / YP87</strain>
    </source>
</reference>
<protein>
    <recommendedName>
        <fullName evidence="1">Adenylyl-sulfate kinase</fullName>
        <ecNumber evidence="1">2.7.1.25</ecNumber>
    </recommendedName>
    <alternativeName>
        <fullName evidence="1">APS kinase</fullName>
    </alternativeName>
    <alternativeName>
        <fullName evidence="1">ATP adenosine-5'-phosphosulfate 3'-phosphotransferase</fullName>
    </alternativeName>
    <alternativeName>
        <fullName evidence="1">Adenosine-5'-phosphosulfate kinase</fullName>
    </alternativeName>
</protein>